<feature type="chain" id="PRO_0000138698" description="DNA double-strand break repair protein Mre11">
    <location>
        <begin position="1"/>
        <end position="382"/>
    </location>
</feature>
<feature type="active site" description="Proton donor" evidence="1">
    <location>
        <position position="85"/>
    </location>
</feature>
<feature type="binding site" evidence="1">
    <location>
        <position position="8"/>
    </location>
    <ligand>
        <name>Mn(2+)</name>
        <dbReference type="ChEBI" id="CHEBI:29035"/>
        <label>1</label>
    </ligand>
</feature>
<feature type="binding site" evidence="1">
    <location>
        <position position="10"/>
    </location>
    <ligand>
        <name>Mn(2+)</name>
        <dbReference type="ChEBI" id="CHEBI:29035"/>
        <label>1</label>
    </ligand>
</feature>
<feature type="binding site" evidence="1">
    <location>
        <position position="49"/>
    </location>
    <ligand>
        <name>Mn(2+)</name>
        <dbReference type="ChEBI" id="CHEBI:29035"/>
        <label>1</label>
    </ligand>
</feature>
<feature type="binding site" evidence="1">
    <location>
        <position position="49"/>
    </location>
    <ligand>
        <name>Mn(2+)</name>
        <dbReference type="ChEBI" id="CHEBI:29035"/>
        <label>2</label>
    </ligand>
</feature>
<feature type="binding site" evidence="1">
    <location>
        <position position="84"/>
    </location>
    <ligand>
        <name>Mn(2+)</name>
        <dbReference type="ChEBI" id="CHEBI:29035"/>
        <label>2</label>
    </ligand>
</feature>
<feature type="binding site" evidence="1">
    <location>
        <position position="156"/>
    </location>
    <ligand>
        <name>Mn(2+)</name>
        <dbReference type="ChEBI" id="CHEBI:29035"/>
        <label>2</label>
    </ligand>
</feature>
<feature type="binding site" evidence="1">
    <location>
        <position position="187"/>
    </location>
    <ligand>
        <name>Mn(2+)</name>
        <dbReference type="ChEBI" id="CHEBI:29035"/>
        <label>2</label>
    </ligand>
</feature>
<feature type="binding site" evidence="1">
    <location>
        <position position="189"/>
    </location>
    <ligand>
        <name>Mn(2+)</name>
        <dbReference type="ChEBI" id="CHEBI:29035"/>
        <label>1</label>
    </ligand>
</feature>
<accession>Q8NKQ0</accession>
<accession>Q4JCJ7</accession>
<dbReference type="EC" id="3.1.-.-" evidence="1"/>
<dbReference type="EMBL" id="AJ437617">
    <property type="protein sequence ID" value="CAD26844.1"/>
    <property type="molecule type" value="Genomic_DNA"/>
</dbReference>
<dbReference type="EMBL" id="CP000077">
    <property type="protein sequence ID" value="AAY79482.1"/>
    <property type="molecule type" value="Genomic_DNA"/>
</dbReference>
<dbReference type="RefSeq" id="WP_011276983.1">
    <property type="nucleotide sequence ID" value="NC_007181.1"/>
</dbReference>
<dbReference type="SMR" id="Q8NKQ0"/>
<dbReference type="STRING" id="330779.Saci_0052"/>
<dbReference type="GeneID" id="14550584"/>
<dbReference type="GeneID" id="78440408"/>
<dbReference type="KEGG" id="sai:Saci_0052"/>
<dbReference type="PATRIC" id="fig|330779.12.peg.49"/>
<dbReference type="eggNOG" id="arCOG00397">
    <property type="taxonomic scope" value="Archaea"/>
</dbReference>
<dbReference type="HOGENOM" id="CLU_026621_5_2_2"/>
<dbReference type="Proteomes" id="UP000001018">
    <property type="component" value="Chromosome"/>
</dbReference>
<dbReference type="GO" id="GO:0008408">
    <property type="term" value="F:3'-5' exonuclease activity"/>
    <property type="evidence" value="ECO:0007669"/>
    <property type="project" value="UniProtKB-UniRule"/>
</dbReference>
<dbReference type="GO" id="GO:0045027">
    <property type="term" value="F:DNA end binding"/>
    <property type="evidence" value="ECO:0007669"/>
    <property type="project" value="UniProtKB-UniRule"/>
</dbReference>
<dbReference type="GO" id="GO:0004519">
    <property type="term" value="F:endonuclease activity"/>
    <property type="evidence" value="ECO:0007669"/>
    <property type="project" value="UniProtKB-UniRule"/>
</dbReference>
<dbReference type="GO" id="GO:0030145">
    <property type="term" value="F:manganese ion binding"/>
    <property type="evidence" value="ECO:0007669"/>
    <property type="project" value="UniProtKB-UniRule"/>
</dbReference>
<dbReference type="GO" id="GO:0000403">
    <property type="term" value="F:Y-form DNA binding"/>
    <property type="evidence" value="ECO:0007669"/>
    <property type="project" value="UniProtKB-UniRule"/>
</dbReference>
<dbReference type="GO" id="GO:0006302">
    <property type="term" value="P:double-strand break repair"/>
    <property type="evidence" value="ECO:0007669"/>
    <property type="project" value="UniProtKB-UniRule"/>
</dbReference>
<dbReference type="CDD" id="cd00840">
    <property type="entry name" value="MPP_Mre11_N"/>
    <property type="match status" value="1"/>
</dbReference>
<dbReference type="Gene3D" id="3.60.21.10">
    <property type="match status" value="1"/>
</dbReference>
<dbReference type="HAMAP" id="MF_02044">
    <property type="entry name" value="Mre11"/>
    <property type="match status" value="1"/>
</dbReference>
<dbReference type="InterPro" id="IPR004843">
    <property type="entry name" value="Calcineurin-like_PHP_ApaH"/>
</dbReference>
<dbReference type="InterPro" id="IPR050535">
    <property type="entry name" value="DNA_Repair-Maintenance_Comp"/>
</dbReference>
<dbReference type="InterPro" id="IPR053459">
    <property type="entry name" value="DSB_Repair_Mre11/Rad50"/>
</dbReference>
<dbReference type="InterPro" id="IPR029052">
    <property type="entry name" value="Metallo-depent_PP-like"/>
</dbReference>
<dbReference type="InterPro" id="IPR032885">
    <property type="entry name" value="Mre11_archaea-type"/>
</dbReference>
<dbReference type="InterPro" id="IPR041796">
    <property type="entry name" value="Mre11_N"/>
</dbReference>
<dbReference type="NCBIfam" id="NF041031">
    <property type="entry name" value="Mre11_Sulfo"/>
    <property type="match status" value="1"/>
</dbReference>
<dbReference type="PANTHER" id="PTHR30337">
    <property type="entry name" value="COMPONENT OF ATP-DEPENDENT DSDNA EXONUCLEASE"/>
    <property type="match status" value="1"/>
</dbReference>
<dbReference type="PANTHER" id="PTHR30337:SF0">
    <property type="entry name" value="NUCLEASE SBCCD SUBUNIT D"/>
    <property type="match status" value="1"/>
</dbReference>
<dbReference type="Pfam" id="PF00149">
    <property type="entry name" value="Metallophos"/>
    <property type="match status" value="1"/>
</dbReference>
<dbReference type="SUPFAM" id="SSF56300">
    <property type="entry name" value="Metallo-dependent phosphatases"/>
    <property type="match status" value="1"/>
</dbReference>
<name>MRE11_SULAC</name>
<comment type="function">
    <text evidence="1 3">Part of the Rad50/Mre11 complex, which is involved in the early steps of DNA double-strand break (DSB) repair. The complex may facilitate opening of the processed DNA ends to aid in the recruitment of HerA and NurA. Mre11 binds to DSB ends and has both double-stranded 3'-5' exonuclease activity and single-stranded endonuclease activity (By similarity). Recruited immediately to chromosomal DNA after gamma irradiation, and remains DNA bound in the course of DNA repair (PubMed:18294364).</text>
</comment>
<comment type="cofactor">
    <cofactor evidence="1">
        <name>Mn(2+)</name>
        <dbReference type="ChEBI" id="CHEBI:29035"/>
    </cofactor>
    <text evidence="1">Binds 2 manganese ions per subunit.</text>
</comment>
<comment type="activity regulation">
    <text evidence="1">Nuclease activity is regulated by Rad50.</text>
</comment>
<comment type="subunit">
    <text evidence="1 3">Homodimer. Forms a heterotetramer composed of two Mre11 subunits and two Rad50 subunits (By similarity). Interacts with Rad50 and HerA (PubMed:18294364).</text>
</comment>
<comment type="induction">
    <text evidence="2">Part of the nurA-rad50-mre11-herA operon, these genes are cotranscribed.</text>
</comment>
<comment type="similarity">
    <text evidence="1">Belongs to the MRE11/RAD32 family.</text>
</comment>
<protein>
    <recommendedName>
        <fullName evidence="1">DNA double-strand break repair protein Mre11</fullName>
        <ecNumber evidence="1">3.1.-.-</ecNumber>
    </recommendedName>
</protein>
<gene>
    <name evidence="1" type="primary">mre11</name>
    <name type="ordered locus">Saci_0052</name>
</gene>
<sequence>MQLLHISDTHLGKRQYNLESREKDVYDTFTQLIDIAINEHVKAVIHTGDLFDVNNPPNRAKLHAIKELKRLKDHNIPFICIAGDHDSPKRKEEIYPQRILEEFNLIKILQKIDNRVKLENVEVYGISHISNVSVNDLKEQLSKVKPETRKSILMLHQGIRTYLPYQGAWQIELSDLPKGFSLYAVGHLHSRRKDYLDGGALIEIAGSPDIMREEEIEDYQKSKKGATLIDMSGDLPSINYINVNIRDQLVLDINVDKIEQSIESVIQKLKENVKNDKKPILHIELEGTVPIRKDVLMTKLQALRDYVEHYRIYKNNIVSIKEENLKTKLKTTYSSLNDIIADYLKGIGYTDEETKIIIDIINEEDEKKVEELLKKFAGVEDK</sequence>
<evidence type="ECO:0000255" key="1">
    <source>
        <dbReference type="HAMAP-Rule" id="MF_02044"/>
    </source>
</evidence>
<evidence type="ECO:0000269" key="2">
    <source>
    </source>
</evidence>
<evidence type="ECO:0000269" key="3">
    <source>
    </source>
</evidence>
<proteinExistence type="evidence at protein level"/>
<keyword id="KW-0227">DNA damage</keyword>
<keyword id="KW-0234">DNA repair</keyword>
<keyword id="KW-0255">Endonuclease</keyword>
<keyword id="KW-0269">Exonuclease</keyword>
<keyword id="KW-0378">Hydrolase</keyword>
<keyword id="KW-0464">Manganese</keyword>
<keyword id="KW-0479">Metal-binding</keyword>
<keyword id="KW-0540">Nuclease</keyword>
<keyword id="KW-1185">Reference proteome</keyword>
<organism>
    <name type="scientific">Sulfolobus acidocaldarius (strain ATCC 33909 / DSM 639 / JCM 8929 / NBRC 15157 / NCIMB 11770)</name>
    <dbReference type="NCBI Taxonomy" id="330779"/>
    <lineage>
        <taxon>Archaea</taxon>
        <taxon>Thermoproteota</taxon>
        <taxon>Thermoprotei</taxon>
        <taxon>Sulfolobales</taxon>
        <taxon>Sulfolobaceae</taxon>
        <taxon>Sulfolobus</taxon>
    </lineage>
</organism>
<reference key="1">
    <citation type="journal article" date="2002" name="EMBO Rep.">
        <title>NurA, a novel 5'-3' nuclease gene linked to rad50 and mre11 homologs of thermophilic Archaea.</title>
        <authorList>
            <person name="Constantinesco F."/>
            <person name="Forterre P."/>
            <person name="Elie C."/>
        </authorList>
    </citation>
    <scope>NUCLEOTIDE SEQUENCE [GENOMIC DNA]</scope>
    <source>
        <strain>ATCC 33909 / DSM 639 / JCM 8929 / NBRC 15157 / NCIMB 11770</strain>
    </source>
</reference>
<reference key="2">
    <citation type="journal article" date="2005" name="J. Bacteriol.">
        <title>The genome of Sulfolobus acidocaldarius, a model organism of the Crenarchaeota.</title>
        <authorList>
            <person name="Chen L."/>
            <person name="Bruegger K."/>
            <person name="Skovgaard M."/>
            <person name="Redder P."/>
            <person name="She Q."/>
            <person name="Torarinsson E."/>
            <person name="Greve B."/>
            <person name="Awayez M."/>
            <person name="Zibat A."/>
            <person name="Klenk H.-P."/>
            <person name="Garrett R.A."/>
        </authorList>
    </citation>
    <scope>NUCLEOTIDE SEQUENCE [LARGE SCALE GENOMIC DNA]</scope>
    <source>
        <strain>ATCC 33909 / DSM 639 / JCM 8929 / NBRC 15157 / NCIMB 11770</strain>
    </source>
</reference>
<reference key="3">
    <citation type="journal article" date="2004" name="Nucleic Acids Res.">
        <title>A bipolar DNA helicase gene, herA, clusters with rad50, mre11 and nurA genes in thermophilic archaea.</title>
        <authorList>
            <person name="Constantinesco F."/>
            <person name="Forterre P."/>
            <person name="Koonin E.V."/>
            <person name="Aravind L."/>
            <person name="Elie C."/>
        </authorList>
    </citation>
    <scope>INDUCTION</scope>
    <source>
        <strain>ATCC 33909 / DSM 639 / JCM 8929 / NBRC 15157 / NCIMB 11770</strain>
    </source>
</reference>
<reference key="4">
    <citation type="journal article" date="2008" name="BMC Mol. Biol.">
        <title>The Mre11 protein interacts with both Rad50 and the HerA bipolar helicase and is recruited to DNA following gamma irradiation in the archaeon Sulfolobus acidocaldarius.</title>
        <authorList>
            <person name="Quaiser A."/>
            <person name="Constantinesco F."/>
            <person name="White M.F."/>
            <person name="Forterre P."/>
            <person name="Elie C."/>
        </authorList>
    </citation>
    <scope>FUNCTION IN DNA REPAIR</scope>
    <scope>INTERACTION WITH RAD50 AND HERA</scope>
    <source>
        <strain>ATCC 33909 / DSM 639 / JCM 8929 / NBRC 15157 / NCIMB 11770</strain>
    </source>
</reference>